<reference key="1">
    <citation type="journal article" date="1998" name="Science">
        <title>Genome sequence of the nematode C. elegans: a platform for investigating biology.</title>
        <authorList>
            <consortium name="The C. elegans sequencing consortium"/>
        </authorList>
    </citation>
    <scope>NUCLEOTIDE SEQUENCE [LARGE SCALE GENOMIC DNA]</scope>
    <source>
        <strain>Bristol N2</strain>
    </source>
</reference>
<sequence>MTKHLLLMLQILYVLRIFRTQMVIQTSPVRSIYQNLRIHHVFQIREILLLHMAHEVLHFYCCLGFSPFFYNSRFLQFKVSIRCPLFHAQNIFNSKLEKYECTFKYYSNPLLVNVIILFGLRISVWKWLYLT</sequence>
<name>YO95_CAEEL</name>
<protein>
    <recommendedName>
        <fullName>Uncharacterized protein T20B12.5</fullName>
    </recommendedName>
</protein>
<feature type="chain" id="PRO_0000065474" description="Uncharacterized protein T20B12.5">
    <location>
        <begin position="1"/>
        <end position="131"/>
    </location>
</feature>
<keyword id="KW-1185">Reference proteome</keyword>
<dbReference type="EMBL" id="FO081094">
    <property type="protein sequence ID" value="CCD69074.1"/>
    <property type="molecule type" value="Genomic_DNA"/>
</dbReference>
<dbReference type="PIR" id="T16905">
    <property type="entry name" value="T16905"/>
</dbReference>
<dbReference type="RefSeq" id="NP_498629.1">
    <property type="nucleotide sequence ID" value="NM_066228.1"/>
</dbReference>
<dbReference type="BioGRID" id="53292">
    <property type="interactions" value="1"/>
</dbReference>
<dbReference type="STRING" id="6239.T20B12.5.1"/>
<dbReference type="PaxDb" id="6239-T20B12.5"/>
<dbReference type="EnsemblMetazoa" id="T20B12.5.1">
    <property type="protein sequence ID" value="T20B12.5.1"/>
    <property type="gene ID" value="WBGene00020603"/>
</dbReference>
<dbReference type="GeneID" id="188632"/>
<dbReference type="KEGG" id="cel:CELE_T20B12.5"/>
<dbReference type="UCSC" id="T20B12.5">
    <property type="organism name" value="c. elegans"/>
</dbReference>
<dbReference type="AGR" id="WB:WBGene00020603"/>
<dbReference type="CTD" id="188632"/>
<dbReference type="WormBase" id="T20B12.5">
    <property type="protein sequence ID" value="CE01411"/>
    <property type="gene ID" value="WBGene00020603"/>
</dbReference>
<dbReference type="HOGENOM" id="CLU_1929462_0_0_1"/>
<dbReference type="InParanoid" id="P41845"/>
<dbReference type="PRO" id="PR:P41845"/>
<dbReference type="Proteomes" id="UP000001940">
    <property type="component" value="Chromosome III"/>
</dbReference>
<dbReference type="Bgee" id="WBGene00020603">
    <property type="expression patterns" value="Expressed in pharyngeal muscle cell (C elegans)"/>
</dbReference>
<accession>P41845</accession>
<proteinExistence type="predicted"/>
<gene>
    <name type="ORF">T20B12.5</name>
</gene>
<organism>
    <name type="scientific">Caenorhabditis elegans</name>
    <dbReference type="NCBI Taxonomy" id="6239"/>
    <lineage>
        <taxon>Eukaryota</taxon>
        <taxon>Metazoa</taxon>
        <taxon>Ecdysozoa</taxon>
        <taxon>Nematoda</taxon>
        <taxon>Chromadorea</taxon>
        <taxon>Rhabditida</taxon>
        <taxon>Rhabditina</taxon>
        <taxon>Rhabditomorpha</taxon>
        <taxon>Rhabditoidea</taxon>
        <taxon>Rhabditidae</taxon>
        <taxon>Peloderinae</taxon>
        <taxon>Caenorhabditis</taxon>
    </lineage>
</organism>